<accession>Q605M7</accession>
<sequence length="939" mass="105504">MDYKSTLNLPQTPFPMKANLAQREPEQIERWRTLDLYRKVRSRRAGRDKFILHDGPPYANGEIHIGHAVNKILKDFIVKSRTLSGFDAPYVPGWDCHGLPIELMVEKKIGKAGHKVSPAEFRKACREYAAAQVDLQRREFIRLGVLGDWENPYLTMDFRFEADIVRALGRIAARGHLAKGAKPVHWCLDCGSALAEAEVEYENKHSPAIDVRFAVVDEFGLMARFHTADGALGEGPLSVVIWTTTPWTLPANQAVALNPELDYVVVQRTDIKERLVLADALMKDVMLRCGAEGYRVIGYCKGAALEGVQLRHPFYDRIVPVILGDHVTLDAGTGAVHTAPGHGQEDYAVGQRYGLAVDNPVGGDGRFLPNTELFAGEHVLSANDHVIEVLKERGALLHEARIEHSYPHCWRHKTPVIFRATPQWFIAMDKGELRRQALEAIGQVQWIPDWGQARIEAMVGNRPDWCISRQRTWGVPIPLFVHKETGALHPDTDRLIEEIAKKIETAGIDAWFELDPAELLGAEADRYGKIGDTLDVWFDSGVTHHAVLAQNPDLAFPADLYLEGSDQHRGWFQSSLMTSVAMSGQAPYKAVLTHGFTVDAEGKKMSKSRGNVVAPQKVMQTLGADVLRLWVAATDYRGEMTVSDEILKRISDVYRRIRNTARYLLANLDGFDPALHLVKPEDMLALDRWVVDRALAIQQEVIEAYETYQFNTIFQKTHHFCSVDLGSFYLDVLKDRQYTCKTDSLPRRSGQTAMYHIAEAMVRWLAPVLSFTAEEIWQYLPGQREESVFLSEWYDGLFGLDENSRCDRAFWDQMLKIREAVSKELEILRVRGEIGASLDAEVELFCDPPLFRKLSEAGDELRFVLLTSYATVKPAAEAGTDALPTEIPGLELKLAASGKPKCVRCWHHRHDVGTHPDHPELCGRCVDNVAGTGELRTFG</sequence>
<name>SYI_METCA</name>
<reference key="1">
    <citation type="journal article" date="2004" name="PLoS Biol.">
        <title>Genomic insights into methanotrophy: the complete genome sequence of Methylococcus capsulatus (Bath).</title>
        <authorList>
            <person name="Ward N.L."/>
            <person name="Larsen O."/>
            <person name="Sakwa J."/>
            <person name="Bruseth L."/>
            <person name="Khouri H.M."/>
            <person name="Durkin A.S."/>
            <person name="Dimitrov G."/>
            <person name="Jiang L."/>
            <person name="Scanlan D."/>
            <person name="Kang K.H."/>
            <person name="Lewis M.R."/>
            <person name="Nelson K.E."/>
            <person name="Methe B.A."/>
            <person name="Wu M."/>
            <person name="Heidelberg J.F."/>
            <person name="Paulsen I.T."/>
            <person name="Fouts D.E."/>
            <person name="Ravel J."/>
            <person name="Tettelin H."/>
            <person name="Ren Q."/>
            <person name="Read T.D."/>
            <person name="DeBoy R.T."/>
            <person name="Seshadri R."/>
            <person name="Salzberg S.L."/>
            <person name="Jensen H.B."/>
            <person name="Birkeland N.K."/>
            <person name="Nelson W.C."/>
            <person name="Dodson R.J."/>
            <person name="Grindhaug S.H."/>
            <person name="Holt I.E."/>
            <person name="Eidhammer I."/>
            <person name="Jonasen I."/>
            <person name="Vanaken S."/>
            <person name="Utterback T.R."/>
            <person name="Feldblyum T.V."/>
            <person name="Fraser C.M."/>
            <person name="Lillehaug J.R."/>
            <person name="Eisen J.A."/>
        </authorList>
    </citation>
    <scope>NUCLEOTIDE SEQUENCE [LARGE SCALE GENOMIC DNA]</scope>
    <source>
        <strain>ATCC 33009 / NCIMB 11132 / Bath</strain>
    </source>
</reference>
<feature type="chain" id="PRO_0000098415" description="Isoleucine--tRNA ligase">
    <location>
        <begin position="1"/>
        <end position="939"/>
    </location>
</feature>
<feature type="short sequence motif" description="'HIGH' region">
    <location>
        <begin position="57"/>
        <end position="67"/>
    </location>
</feature>
<feature type="short sequence motif" description="'KMSKS' region">
    <location>
        <begin position="604"/>
        <end position="608"/>
    </location>
</feature>
<feature type="binding site" evidence="1">
    <location>
        <position position="563"/>
    </location>
    <ligand>
        <name>L-isoleucyl-5'-AMP</name>
        <dbReference type="ChEBI" id="CHEBI:178002"/>
    </ligand>
</feature>
<feature type="binding site" evidence="1">
    <location>
        <position position="607"/>
    </location>
    <ligand>
        <name>ATP</name>
        <dbReference type="ChEBI" id="CHEBI:30616"/>
    </ligand>
</feature>
<feature type="binding site" evidence="1">
    <location>
        <position position="902"/>
    </location>
    <ligand>
        <name>Zn(2+)</name>
        <dbReference type="ChEBI" id="CHEBI:29105"/>
    </ligand>
</feature>
<feature type="binding site" evidence="1">
    <location>
        <position position="905"/>
    </location>
    <ligand>
        <name>Zn(2+)</name>
        <dbReference type="ChEBI" id="CHEBI:29105"/>
    </ligand>
</feature>
<feature type="binding site" evidence="1">
    <location>
        <position position="922"/>
    </location>
    <ligand>
        <name>Zn(2+)</name>
        <dbReference type="ChEBI" id="CHEBI:29105"/>
    </ligand>
</feature>
<feature type="binding site" evidence="1">
    <location>
        <position position="925"/>
    </location>
    <ligand>
        <name>Zn(2+)</name>
        <dbReference type="ChEBI" id="CHEBI:29105"/>
    </ligand>
</feature>
<evidence type="ECO:0000255" key="1">
    <source>
        <dbReference type="HAMAP-Rule" id="MF_02002"/>
    </source>
</evidence>
<proteinExistence type="inferred from homology"/>
<gene>
    <name evidence="1" type="primary">ileS</name>
    <name type="ordered locus">MCA2253</name>
</gene>
<protein>
    <recommendedName>
        <fullName evidence="1">Isoleucine--tRNA ligase</fullName>
        <ecNumber evidence="1">6.1.1.5</ecNumber>
    </recommendedName>
    <alternativeName>
        <fullName evidence="1">Isoleucyl-tRNA synthetase</fullName>
        <shortName evidence="1">IleRS</shortName>
    </alternativeName>
</protein>
<organism>
    <name type="scientific">Methylococcus capsulatus (strain ATCC 33009 / NCIMB 11132 / Bath)</name>
    <dbReference type="NCBI Taxonomy" id="243233"/>
    <lineage>
        <taxon>Bacteria</taxon>
        <taxon>Pseudomonadati</taxon>
        <taxon>Pseudomonadota</taxon>
        <taxon>Gammaproteobacteria</taxon>
        <taxon>Methylococcales</taxon>
        <taxon>Methylococcaceae</taxon>
        <taxon>Methylococcus</taxon>
    </lineage>
</organism>
<keyword id="KW-0030">Aminoacyl-tRNA synthetase</keyword>
<keyword id="KW-0067">ATP-binding</keyword>
<keyword id="KW-0963">Cytoplasm</keyword>
<keyword id="KW-0436">Ligase</keyword>
<keyword id="KW-0479">Metal-binding</keyword>
<keyword id="KW-0547">Nucleotide-binding</keyword>
<keyword id="KW-0648">Protein biosynthesis</keyword>
<keyword id="KW-1185">Reference proteome</keyword>
<keyword id="KW-0862">Zinc</keyword>
<comment type="function">
    <text evidence="1">Catalyzes the attachment of isoleucine to tRNA(Ile). As IleRS can inadvertently accommodate and process structurally similar amino acids such as valine, to avoid such errors it has two additional distinct tRNA(Ile)-dependent editing activities. One activity is designated as 'pretransfer' editing and involves the hydrolysis of activated Val-AMP. The other activity is designated 'posttransfer' editing and involves deacylation of mischarged Val-tRNA(Ile).</text>
</comment>
<comment type="catalytic activity">
    <reaction evidence="1">
        <text>tRNA(Ile) + L-isoleucine + ATP = L-isoleucyl-tRNA(Ile) + AMP + diphosphate</text>
        <dbReference type="Rhea" id="RHEA:11060"/>
        <dbReference type="Rhea" id="RHEA-COMP:9666"/>
        <dbReference type="Rhea" id="RHEA-COMP:9695"/>
        <dbReference type="ChEBI" id="CHEBI:30616"/>
        <dbReference type="ChEBI" id="CHEBI:33019"/>
        <dbReference type="ChEBI" id="CHEBI:58045"/>
        <dbReference type="ChEBI" id="CHEBI:78442"/>
        <dbReference type="ChEBI" id="CHEBI:78528"/>
        <dbReference type="ChEBI" id="CHEBI:456215"/>
        <dbReference type="EC" id="6.1.1.5"/>
    </reaction>
</comment>
<comment type="cofactor">
    <cofactor evidence="1">
        <name>Zn(2+)</name>
        <dbReference type="ChEBI" id="CHEBI:29105"/>
    </cofactor>
    <text evidence="1">Binds 1 zinc ion per subunit.</text>
</comment>
<comment type="subunit">
    <text evidence="1">Monomer.</text>
</comment>
<comment type="subcellular location">
    <subcellularLocation>
        <location evidence="1">Cytoplasm</location>
    </subcellularLocation>
</comment>
<comment type="domain">
    <text evidence="1">IleRS has two distinct active sites: one for aminoacylation and one for editing. The misactivated valine is translocated from the active site to the editing site, which sterically excludes the correctly activated isoleucine. The single editing site contains two valyl binding pockets, one specific for each substrate (Val-AMP or Val-tRNA(Ile)).</text>
</comment>
<comment type="similarity">
    <text evidence="1">Belongs to the class-I aminoacyl-tRNA synthetase family. IleS type 1 subfamily.</text>
</comment>
<dbReference type="EC" id="6.1.1.5" evidence="1"/>
<dbReference type="EMBL" id="AE017282">
    <property type="protein sequence ID" value="AAU91752.1"/>
    <property type="molecule type" value="Genomic_DNA"/>
</dbReference>
<dbReference type="RefSeq" id="WP_010961483.1">
    <property type="nucleotide sequence ID" value="NC_002977.6"/>
</dbReference>
<dbReference type="SMR" id="Q605M7"/>
<dbReference type="STRING" id="243233.MCA2253"/>
<dbReference type="GeneID" id="88224459"/>
<dbReference type="KEGG" id="mca:MCA2253"/>
<dbReference type="eggNOG" id="COG0060">
    <property type="taxonomic scope" value="Bacteria"/>
</dbReference>
<dbReference type="HOGENOM" id="CLU_001493_7_0_6"/>
<dbReference type="Proteomes" id="UP000006821">
    <property type="component" value="Chromosome"/>
</dbReference>
<dbReference type="GO" id="GO:0005829">
    <property type="term" value="C:cytosol"/>
    <property type="evidence" value="ECO:0007669"/>
    <property type="project" value="TreeGrafter"/>
</dbReference>
<dbReference type="GO" id="GO:0002161">
    <property type="term" value="F:aminoacyl-tRNA deacylase activity"/>
    <property type="evidence" value="ECO:0007669"/>
    <property type="project" value="InterPro"/>
</dbReference>
<dbReference type="GO" id="GO:0005524">
    <property type="term" value="F:ATP binding"/>
    <property type="evidence" value="ECO:0007669"/>
    <property type="project" value="UniProtKB-UniRule"/>
</dbReference>
<dbReference type="GO" id="GO:0004822">
    <property type="term" value="F:isoleucine-tRNA ligase activity"/>
    <property type="evidence" value="ECO:0007669"/>
    <property type="project" value="UniProtKB-UniRule"/>
</dbReference>
<dbReference type="GO" id="GO:0000049">
    <property type="term" value="F:tRNA binding"/>
    <property type="evidence" value="ECO:0007669"/>
    <property type="project" value="InterPro"/>
</dbReference>
<dbReference type="GO" id="GO:0008270">
    <property type="term" value="F:zinc ion binding"/>
    <property type="evidence" value="ECO:0007669"/>
    <property type="project" value="UniProtKB-UniRule"/>
</dbReference>
<dbReference type="GO" id="GO:0006428">
    <property type="term" value="P:isoleucyl-tRNA aminoacylation"/>
    <property type="evidence" value="ECO:0007669"/>
    <property type="project" value="UniProtKB-UniRule"/>
</dbReference>
<dbReference type="CDD" id="cd07960">
    <property type="entry name" value="Anticodon_Ia_Ile_BEm"/>
    <property type="match status" value="1"/>
</dbReference>
<dbReference type="CDD" id="cd00818">
    <property type="entry name" value="IleRS_core"/>
    <property type="match status" value="1"/>
</dbReference>
<dbReference type="FunFam" id="1.10.730.20:FF:000001">
    <property type="entry name" value="Isoleucine--tRNA ligase"/>
    <property type="match status" value="1"/>
</dbReference>
<dbReference type="FunFam" id="3.40.50.620:FF:000042">
    <property type="entry name" value="Isoleucine--tRNA ligase"/>
    <property type="match status" value="1"/>
</dbReference>
<dbReference type="FunFam" id="3.40.50.620:FF:000048">
    <property type="entry name" value="Isoleucine--tRNA ligase"/>
    <property type="match status" value="1"/>
</dbReference>
<dbReference type="Gene3D" id="1.10.730.20">
    <property type="match status" value="1"/>
</dbReference>
<dbReference type="Gene3D" id="3.40.50.620">
    <property type="entry name" value="HUPs"/>
    <property type="match status" value="2"/>
</dbReference>
<dbReference type="Gene3D" id="3.90.740.10">
    <property type="entry name" value="Valyl/Leucyl/Isoleucyl-tRNA synthetase, editing domain"/>
    <property type="match status" value="1"/>
</dbReference>
<dbReference type="HAMAP" id="MF_02002">
    <property type="entry name" value="Ile_tRNA_synth_type1"/>
    <property type="match status" value="1"/>
</dbReference>
<dbReference type="InterPro" id="IPR001412">
    <property type="entry name" value="aa-tRNA-synth_I_CS"/>
</dbReference>
<dbReference type="InterPro" id="IPR002300">
    <property type="entry name" value="aa-tRNA-synth_Ia"/>
</dbReference>
<dbReference type="InterPro" id="IPR033708">
    <property type="entry name" value="Anticodon_Ile_BEm"/>
</dbReference>
<dbReference type="InterPro" id="IPR002301">
    <property type="entry name" value="Ile-tRNA-ligase"/>
</dbReference>
<dbReference type="InterPro" id="IPR023585">
    <property type="entry name" value="Ile-tRNA-ligase_type1"/>
</dbReference>
<dbReference type="InterPro" id="IPR050081">
    <property type="entry name" value="Ile-tRNA_ligase"/>
</dbReference>
<dbReference type="InterPro" id="IPR013155">
    <property type="entry name" value="M/V/L/I-tRNA-synth_anticd-bd"/>
</dbReference>
<dbReference type="InterPro" id="IPR014729">
    <property type="entry name" value="Rossmann-like_a/b/a_fold"/>
</dbReference>
<dbReference type="InterPro" id="IPR009080">
    <property type="entry name" value="tRNAsynth_Ia_anticodon-bd"/>
</dbReference>
<dbReference type="InterPro" id="IPR009008">
    <property type="entry name" value="Val/Leu/Ile-tRNA-synth_edit"/>
</dbReference>
<dbReference type="InterPro" id="IPR010663">
    <property type="entry name" value="Znf_FPG/IleRS"/>
</dbReference>
<dbReference type="NCBIfam" id="TIGR00392">
    <property type="entry name" value="ileS"/>
    <property type="match status" value="1"/>
</dbReference>
<dbReference type="PANTHER" id="PTHR42765:SF1">
    <property type="entry name" value="ISOLEUCINE--TRNA LIGASE, MITOCHONDRIAL"/>
    <property type="match status" value="1"/>
</dbReference>
<dbReference type="PANTHER" id="PTHR42765">
    <property type="entry name" value="SOLEUCYL-TRNA SYNTHETASE"/>
    <property type="match status" value="1"/>
</dbReference>
<dbReference type="Pfam" id="PF08264">
    <property type="entry name" value="Anticodon_1"/>
    <property type="match status" value="1"/>
</dbReference>
<dbReference type="Pfam" id="PF00133">
    <property type="entry name" value="tRNA-synt_1"/>
    <property type="match status" value="1"/>
</dbReference>
<dbReference type="Pfam" id="PF06827">
    <property type="entry name" value="zf-FPG_IleRS"/>
    <property type="match status" value="1"/>
</dbReference>
<dbReference type="PRINTS" id="PR00984">
    <property type="entry name" value="TRNASYNTHILE"/>
</dbReference>
<dbReference type="SUPFAM" id="SSF47323">
    <property type="entry name" value="Anticodon-binding domain of a subclass of class I aminoacyl-tRNA synthetases"/>
    <property type="match status" value="1"/>
</dbReference>
<dbReference type="SUPFAM" id="SSF52374">
    <property type="entry name" value="Nucleotidylyl transferase"/>
    <property type="match status" value="1"/>
</dbReference>
<dbReference type="SUPFAM" id="SSF50677">
    <property type="entry name" value="ValRS/IleRS/LeuRS editing domain"/>
    <property type="match status" value="1"/>
</dbReference>
<dbReference type="PROSITE" id="PS00178">
    <property type="entry name" value="AA_TRNA_LIGASE_I"/>
    <property type="match status" value="1"/>
</dbReference>